<name>RL1_SHIBS</name>
<dbReference type="EMBL" id="CP000036">
    <property type="protein sequence ID" value="ABB68445.1"/>
    <property type="molecule type" value="Genomic_DNA"/>
</dbReference>
<dbReference type="RefSeq" id="WP_001096684.1">
    <property type="nucleotide sequence ID" value="NC_007613.1"/>
</dbReference>
<dbReference type="SMR" id="Q31U13"/>
<dbReference type="GeneID" id="93777910"/>
<dbReference type="KEGG" id="sbo:SBO_4004"/>
<dbReference type="HOGENOM" id="CLU_062853_0_0_6"/>
<dbReference type="Proteomes" id="UP000007067">
    <property type="component" value="Chromosome"/>
</dbReference>
<dbReference type="GO" id="GO:0022625">
    <property type="term" value="C:cytosolic large ribosomal subunit"/>
    <property type="evidence" value="ECO:0007669"/>
    <property type="project" value="TreeGrafter"/>
</dbReference>
<dbReference type="GO" id="GO:0019843">
    <property type="term" value="F:rRNA binding"/>
    <property type="evidence" value="ECO:0007669"/>
    <property type="project" value="UniProtKB-UniRule"/>
</dbReference>
<dbReference type="GO" id="GO:0003735">
    <property type="term" value="F:structural constituent of ribosome"/>
    <property type="evidence" value="ECO:0007669"/>
    <property type="project" value="InterPro"/>
</dbReference>
<dbReference type="GO" id="GO:0000049">
    <property type="term" value="F:tRNA binding"/>
    <property type="evidence" value="ECO:0007669"/>
    <property type="project" value="UniProtKB-KW"/>
</dbReference>
<dbReference type="GO" id="GO:0006417">
    <property type="term" value="P:regulation of translation"/>
    <property type="evidence" value="ECO:0007669"/>
    <property type="project" value="UniProtKB-KW"/>
</dbReference>
<dbReference type="GO" id="GO:0006412">
    <property type="term" value="P:translation"/>
    <property type="evidence" value="ECO:0007669"/>
    <property type="project" value="UniProtKB-UniRule"/>
</dbReference>
<dbReference type="CDD" id="cd00403">
    <property type="entry name" value="Ribosomal_L1"/>
    <property type="match status" value="1"/>
</dbReference>
<dbReference type="FunFam" id="3.40.50.790:FF:000001">
    <property type="entry name" value="50S ribosomal protein L1"/>
    <property type="match status" value="1"/>
</dbReference>
<dbReference type="Gene3D" id="3.30.190.20">
    <property type="match status" value="1"/>
</dbReference>
<dbReference type="Gene3D" id="3.40.50.790">
    <property type="match status" value="1"/>
</dbReference>
<dbReference type="HAMAP" id="MF_01318_B">
    <property type="entry name" value="Ribosomal_uL1_B"/>
    <property type="match status" value="1"/>
</dbReference>
<dbReference type="InterPro" id="IPR005878">
    <property type="entry name" value="Ribosom_uL1_bac-type"/>
</dbReference>
<dbReference type="InterPro" id="IPR002143">
    <property type="entry name" value="Ribosomal_uL1"/>
</dbReference>
<dbReference type="InterPro" id="IPR023674">
    <property type="entry name" value="Ribosomal_uL1-like"/>
</dbReference>
<dbReference type="InterPro" id="IPR028364">
    <property type="entry name" value="Ribosomal_uL1/biogenesis"/>
</dbReference>
<dbReference type="InterPro" id="IPR016095">
    <property type="entry name" value="Ribosomal_uL1_3-a/b-sand"/>
</dbReference>
<dbReference type="InterPro" id="IPR023673">
    <property type="entry name" value="Ribosomal_uL1_CS"/>
</dbReference>
<dbReference type="NCBIfam" id="TIGR01169">
    <property type="entry name" value="rplA_bact"/>
    <property type="match status" value="1"/>
</dbReference>
<dbReference type="PANTHER" id="PTHR36427">
    <property type="entry name" value="54S RIBOSOMAL PROTEIN L1, MITOCHONDRIAL"/>
    <property type="match status" value="1"/>
</dbReference>
<dbReference type="PANTHER" id="PTHR36427:SF3">
    <property type="entry name" value="LARGE RIBOSOMAL SUBUNIT PROTEIN UL1M"/>
    <property type="match status" value="1"/>
</dbReference>
<dbReference type="Pfam" id="PF00687">
    <property type="entry name" value="Ribosomal_L1"/>
    <property type="match status" value="1"/>
</dbReference>
<dbReference type="PIRSF" id="PIRSF002155">
    <property type="entry name" value="Ribosomal_L1"/>
    <property type="match status" value="1"/>
</dbReference>
<dbReference type="SUPFAM" id="SSF56808">
    <property type="entry name" value="Ribosomal protein L1"/>
    <property type="match status" value="1"/>
</dbReference>
<dbReference type="PROSITE" id="PS01199">
    <property type="entry name" value="RIBOSOMAL_L1"/>
    <property type="match status" value="1"/>
</dbReference>
<protein>
    <recommendedName>
        <fullName evidence="1">Large ribosomal subunit protein uL1</fullName>
    </recommendedName>
    <alternativeName>
        <fullName evidence="2">50S ribosomal protein L1</fullName>
    </alternativeName>
</protein>
<reference key="1">
    <citation type="journal article" date="2005" name="Nucleic Acids Res.">
        <title>Genome dynamics and diversity of Shigella species, the etiologic agents of bacillary dysentery.</title>
        <authorList>
            <person name="Yang F."/>
            <person name="Yang J."/>
            <person name="Zhang X."/>
            <person name="Chen L."/>
            <person name="Jiang Y."/>
            <person name="Yan Y."/>
            <person name="Tang X."/>
            <person name="Wang J."/>
            <person name="Xiong Z."/>
            <person name="Dong J."/>
            <person name="Xue Y."/>
            <person name="Zhu Y."/>
            <person name="Xu X."/>
            <person name="Sun L."/>
            <person name="Chen S."/>
            <person name="Nie H."/>
            <person name="Peng J."/>
            <person name="Xu J."/>
            <person name="Wang Y."/>
            <person name="Yuan Z."/>
            <person name="Wen Y."/>
            <person name="Yao Z."/>
            <person name="Shen Y."/>
            <person name="Qiang B."/>
            <person name="Hou Y."/>
            <person name="Yu J."/>
            <person name="Jin Q."/>
        </authorList>
    </citation>
    <scope>NUCLEOTIDE SEQUENCE [LARGE SCALE GENOMIC DNA]</scope>
    <source>
        <strain>Sb227</strain>
    </source>
</reference>
<feature type="chain" id="PRO_0000230637" description="Large ribosomal subunit protein uL1">
    <location>
        <begin position="1"/>
        <end position="234"/>
    </location>
</feature>
<evidence type="ECO:0000255" key="1">
    <source>
        <dbReference type="HAMAP-Rule" id="MF_01318"/>
    </source>
</evidence>
<evidence type="ECO:0000305" key="2"/>
<sequence length="234" mass="24730">MAKLTKRMRVIREKVDATKQYDINEAIALLKELATAKFVESVDVAVNLGIDARKSDQNVRGATVLPHGTGRSVRVAVFTQGANAEAAKAAGAELVGMEDLADQIKKGEMNFDVVIASPDAMRVVGQLGQVLGPRGLMPNPKVGTVTPNVAEAVKNAKAGQVRYRNDKNGIIHTTIGKVDFDADKLKENLEALLVALKKAKPTQAKGVYIKKVSISTTMGAGVAVDQAGLSASVN</sequence>
<comment type="function">
    <text evidence="1">Binds directly to 23S rRNA. The L1 stalk is quite mobile in the ribosome, and is involved in E site tRNA release.</text>
</comment>
<comment type="function">
    <text evidence="1">Protein L1 is also a translational repressor protein, it controls the translation of the L11 operon by binding to its mRNA.</text>
</comment>
<comment type="subunit">
    <text evidence="1">Part of the 50S ribosomal subunit.</text>
</comment>
<comment type="similarity">
    <text evidence="1">Belongs to the universal ribosomal protein uL1 family.</text>
</comment>
<keyword id="KW-0678">Repressor</keyword>
<keyword id="KW-0687">Ribonucleoprotein</keyword>
<keyword id="KW-0689">Ribosomal protein</keyword>
<keyword id="KW-0694">RNA-binding</keyword>
<keyword id="KW-0699">rRNA-binding</keyword>
<keyword id="KW-0810">Translation regulation</keyword>
<keyword id="KW-0820">tRNA-binding</keyword>
<organism>
    <name type="scientific">Shigella boydii serotype 4 (strain Sb227)</name>
    <dbReference type="NCBI Taxonomy" id="300268"/>
    <lineage>
        <taxon>Bacteria</taxon>
        <taxon>Pseudomonadati</taxon>
        <taxon>Pseudomonadota</taxon>
        <taxon>Gammaproteobacteria</taxon>
        <taxon>Enterobacterales</taxon>
        <taxon>Enterobacteriaceae</taxon>
        <taxon>Shigella</taxon>
    </lineage>
</organism>
<proteinExistence type="inferred from homology"/>
<gene>
    <name evidence="1" type="primary">rplA</name>
    <name type="ordered locus">SBO_4004</name>
</gene>
<accession>Q31U13</accession>